<feature type="chain" id="PRO_0000373392" description="Inner membrane protein p12">
    <location>
        <begin position="1"/>
        <end position="62"/>
    </location>
</feature>
<feature type="transmembrane region" description="Helical" evidence="2">
    <location>
        <begin position="16"/>
        <end position="36"/>
    </location>
</feature>
<organism>
    <name type="scientific">African swine fever virus (isolate Pig/Kenya/KEN-50/1950)</name>
    <name type="common">ASFV</name>
    <dbReference type="NCBI Taxonomy" id="561445"/>
    <lineage>
        <taxon>Viruses</taxon>
        <taxon>Varidnaviria</taxon>
        <taxon>Bamfordvirae</taxon>
        <taxon>Nucleocytoviricota</taxon>
        <taxon>Pokkesviricetes</taxon>
        <taxon>Asfuvirales</taxon>
        <taxon>Asfarviridae</taxon>
        <taxon>Asfivirus</taxon>
        <taxon>African swine fever virus</taxon>
    </lineage>
</organism>
<keyword id="KW-1015">Disulfide bond</keyword>
<keyword id="KW-0426">Late protein</keyword>
<keyword id="KW-0472">Membrane</keyword>
<keyword id="KW-0812">Transmembrane</keyword>
<keyword id="KW-1133">Transmembrane helix</keyword>
<keyword id="KW-0261">Viral envelope protein</keyword>
<keyword id="KW-0946">Virion</keyword>
<reference key="1">
    <citation type="submission" date="2003-03" db="EMBL/GenBank/DDBJ databases">
        <title>African swine fever virus genomes.</title>
        <authorList>
            <person name="Kutish G.F."/>
            <person name="Rock D.L."/>
        </authorList>
    </citation>
    <scope>NUCLEOTIDE SEQUENCE [LARGE SCALE GENOMIC DNA]</scope>
</reference>
<comment type="subunit">
    <text evidence="1">Homomultimer; disulfide-linked.</text>
</comment>
<comment type="subcellular location">
    <subcellularLocation>
        <location>Virion membrane</location>
        <topology evidence="3">Single-pass membrane protein</topology>
    </subcellularLocation>
    <text evidence="1">Part of the virion inner membrane.</text>
</comment>
<comment type="induction">
    <text evidence="3">Expressed in the late phase of the viral replicative cycle.</text>
</comment>
<comment type="PTM">
    <text evidence="1">Not glycosylated.</text>
</comment>
<comment type="similarity">
    <text evidence="3">Belongs to the asfivirus inner membrane protein p12 family.</text>
</comment>
<dbReference type="EMBL" id="AY261360">
    <property type="status" value="NOT_ANNOTATED_CDS"/>
    <property type="molecule type" value="Genomic_DNA"/>
</dbReference>
<dbReference type="SMR" id="P0C9Y1"/>
<dbReference type="Proteomes" id="UP000000861">
    <property type="component" value="Segment"/>
</dbReference>
<dbReference type="GO" id="GO:0016020">
    <property type="term" value="C:membrane"/>
    <property type="evidence" value="ECO:0007669"/>
    <property type="project" value="UniProtKB-KW"/>
</dbReference>
<dbReference type="GO" id="GO:0019031">
    <property type="term" value="C:viral envelope"/>
    <property type="evidence" value="ECO:0007669"/>
    <property type="project" value="UniProtKB-KW"/>
</dbReference>
<dbReference type="GO" id="GO:0055036">
    <property type="term" value="C:virion membrane"/>
    <property type="evidence" value="ECO:0007669"/>
    <property type="project" value="UniProtKB-SubCell"/>
</dbReference>
<protein>
    <recommendedName>
        <fullName>Inner membrane protein p12</fullName>
    </recommendedName>
    <alternativeName>
        <fullName>Protein p12</fullName>
    </alternativeName>
</protein>
<gene>
    <name type="ordered locus">Ken-110</name>
</gene>
<proteinExistence type="inferred from homology"/>
<evidence type="ECO:0000250" key="1">
    <source>
        <dbReference type="UniProtKB" id="P32510"/>
    </source>
</evidence>
<evidence type="ECO:0000255" key="2"/>
<evidence type="ECO:0000305" key="3"/>
<sequence>MALDGSSGGGSNVETLLIVAIVVVIMAIMLYYFWWMPRQQQKKCSKAEECTCTNGSCSLKTS</sequence>
<name>P12_ASFK5</name>
<organismHost>
    <name type="scientific">Ornithodoros</name>
    <name type="common">relapsing fever ticks</name>
    <dbReference type="NCBI Taxonomy" id="6937"/>
</organismHost>
<organismHost>
    <name type="scientific">Phacochoerus aethiopicus</name>
    <name type="common">Warthog</name>
    <dbReference type="NCBI Taxonomy" id="85517"/>
</organismHost>
<organismHost>
    <name type="scientific">Phacochoerus africanus</name>
    <name type="common">Warthog</name>
    <dbReference type="NCBI Taxonomy" id="41426"/>
</organismHost>
<organismHost>
    <name type="scientific">Potamochoerus larvatus</name>
    <name type="common">Bushpig</name>
    <dbReference type="NCBI Taxonomy" id="273792"/>
</organismHost>
<organismHost>
    <name type="scientific">Sus scrofa</name>
    <name type="common">Pig</name>
    <dbReference type="NCBI Taxonomy" id="9823"/>
</organismHost>
<accession>P0C9Y1</accession>